<keyword id="KW-0113">Calvin cycle</keyword>
<keyword id="KW-0120">Carbon dioxide fixation</keyword>
<keyword id="KW-0150">Chloroplast</keyword>
<keyword id="KW-1015">Disulfide bond</keyword>
<keyword id="KW-0456">Lyase</keyword>
<keyword id="KW-0460">Magnesium</keyword>
<keyword id="KW-0479">Metal-binding</keyword>
<keyword id="KW-0488">Methylation</keyword>
<keyword id="KW-0503">Monooxygenase</keyword>
<keyword id="KW-0560">Oxidoreductase</keyword>
<keyword id="KW-0601">Photorespiration</keyword>
<keyword id="KW-0602">Photosynthesis</keyword>
<keyword id="KW-0934">Plastid</keyword>
<reference key="1">
    <citation type="journal article" date="1992" name="Science">
        <title>Carnivorous plants: phylogeny and structural evolution.</title>
        <authorList>
            <person name="Albert V.A."/>
            <person name="Williams S.E."/>
            <person name="Chase M.W."/>
        </authorList>
    </citation>
    <scope>NUCLEOTIDE SEQUENCE [GENOMIC DNA]</scope>
</reference>
<organism>
    <name type="scientific">Pinguicula caerulea</name>
    <name type="common">Blueflower butterwort</name>
    <dbReference type="NCBI Taxonomy" id="4198"/>
    <lineage>
        <taxon>Eukaryota</taxon>
        <taxon>Viridiplantae</taxon>
        <taxon>Streptophyta</taxon>
        <taxon>Embryophyta</taxon>
        <taxon>Tracheophyta</taxon>
        <taxon>Spermatophyta</taxon>
        <taxon>Magnoliopsida</taxon>
        <taxon>eudicotyledons</taxon>
        <taxon>Gunneridae</taxon>
        <taxon>Pentapetalae</taxon>
        <taxon>asterids</taxon>
        <taxon>lamiids</taxon>
        <taxon>Lamiales</taxon>
        <taxon>Lentibulariaceae</taxon>
        <taxon>Pinguicula</taxon>
    </lineage>
</organism>
<comment type="function">
    <text evidence="1">RuBisCO catalyzes two reactions: the carboxylation of D-ribulose 1,5-bisphosphate, the primary event in carbon dioxide fixation, as well as the oxidative fragmentation of the pentose substrate in the photorespiration process. Both reactions occur simultaneously and in competition at the same active site.</text>
</comment>
<comment type="catalytic activity">
    <reaction evidence="1">
        <text>2 (2R)-3-phosphoglycerate + 2 H(+) = D-ribulose 1,5-bisphosphate + CO2 + H2O</text>
        <dbReference type="Rhea" id="RHEA:23124"/>
        <dbReference type="ChEBI" id="CHEBI:15377"/>
        <dbReference type="ChEBI" id="CHEBI:15378"/>
        <dbReference type="ChEBI" id="CHEBI:16526"/>
        <dbReference type="ChEBI" id="CHEBI:57870"/>
        <dbReference type="ChEBI" id="CHEBI:58272"/>
        <dbReference type="EC" id="4.1.1.39"/>
    </reaction>
</comment>
<comment type="catalytic activity">
    <reaction evidence="1">
        <text>D-ribulose 1,5-bisphosphate + O2 = 2-phosphoglycolate + (2R)-3-phosphoglycerate + 2 H(+)</text>
        <dbReference type="Rhea" id="RHEA:36631"/>
        <dbReference type="ChEBI" id="CHEBI:15378"/>
        <dbReference type="ChEBI" id="CHEBI:15379"/>
        <dbReference type="ChEBI" id="CHEBI:57870"/>
        <dbReference type="ChEBI" id="CHEBI:58033"/>
        <dbReference type="ChEBI" id="CHEBI:58272"/>
    </reaction>
</comment>
<comment type="cofactor">
    <cofactor evidence="1">
        <name>Mg(2+)</name>
        <dbReference type="ChEBI" id="CHEBI:18420"/>
    </cofactor>
    <text evidence="1">Binds 1 Mg(2+) ion per subunit.</text>
</comment>
<comment type="subunit">
    <text evidence="1">Heterohexadecamer of 8 large chains and 8 small chains; disulfide-linked. The disulfide link is formed within the large subunit homodimers.</text>
</comment>
<comment type="subcellular location">
    <subcellularLocation>
        <location>Plastid</location>
        <location>Chloroplast</location>
    </subcellularLocation>
</comment>
<comment type="PTM">
    <text evidence="1">The disulfide bond which can form in the large chain dimeric partners within the hexadecamer appears to be associated with oxidative stress and protein turnover.</text>
</comment>
<comment type="miscellaneous">
    <text evidence="1">The basic functional RuBisCO is composed of a large chain homodimer in a 'head-to-tail' conformation. In form I RuBisCO this homodimer is arranged in a barrel-like tetramer with the small subunits forming a tetrameric 'cap' on each end of the 'barrel'.</text>
</comment>
<comment type="similarity">
    <text evidence="1">Belongs to the RuBisCO large chain family. Type I subfamily.</text>
</comment>
<accession>P28440</accession>
<name>RBL_PINCA</name>
<evidence type="ECO:0000255" key="1">
    <source>
        <dbReference type="HAMAP-Rule" id="MF_01338"/>
    </source>
</evidence>
<sequence>VGFKAGVKEYKLTYYTPEYETKDTDILAAFRVTPQPGVPPEEAGAAVAAESSTGTWTTVWTDGLTSLDRYKGRCYNIEPVPGETDQYICYVAYPLDLFEEGSVTNMFTSIVGNVFGFKALRALRLEDLRIPPAYIKTFQGPPHGIQVERDKLNKYGRPLLGCTIKPKLGLSAKNYGRAVYECLRGGLDFTKDDENVNSQPFMRWRDRFLFCAEAIYKSQAETGEIKGHYLNATAGTCEEMIKRAVFARELGVPIVMHDYLTGGFTANTSLAHYCRDNGLLLHIHRAMHAVIDRQKNHGIHFRVLAKALRMSGGDHIHSGTVVGKLEGERDITLGFVDLLRDDFIEEDRSRGIYFTQDWVSLPGVLPVASGGIHVWHMPALTEIFGDDSVLQFGGGTLGHPWGNAPGAVANRVALEACVQARNEGRDLAAEGNAIIREASKWSPELAAACEVWKEIKFEFKAVDTLD</sequence>
<geneLocation type="chloroplast"/>
<dbReference type="EC" id="4.1.1.39" evidence="1"/>
<dbReference type="EMBL" id="L01942">
    <property type="protein sequence ID" value="AAA84552.2"/>
    <property type="molecule type" value="Genomic_DNA"/>
</dbReference>
<dbReference type="SMR" id="P28440"/>
<dbReference type="GO" id="GO:0009507">
    <property type="term" value="C:chloroplast"/>
    <property type="evidence" value="ECO:0007669"/>
    <property type="project" value="UniProtKB-SubCell"/>
</dbReference>
<dbReference type="GO" id="GO:0000287">
    <property type="term" value="F:magnesium ion binding"/>
    <property type="evidence" value="ECO:0007669"/>
    <property type="project" value="InterPro"/>
</dbReference>
<dbReference type="GO" id="GO:0004497">
    <property type="term" value="F:monooxygenase activity"/>
    <property type="evidence" value="ECO:0007669"/>
    <property type="project" value="UniProtKB-KW"/>
</dbReference>
<dbReference type="GO" id="GO:0016984">
    <property type="term" value="F:ribulose-bisphosphate carboxylase activity"/>
    <property type="evidence" value="ECO:0007669"/>
    <property type="project" value="UniProtKB-EC"/>
</dbReference>
<dbReference type="GO" id="GO:0009853">
    <property type="term" value="P:photorespiration"/>
    <property type="evidence" value="ECO:0007669"/>
    <property type="project" value="UniProtKB-KW"/>
</dbReference>
<dbReference type="GO" id="GO:0019253">
    <property type="term" value="P:reductive pentose-phosphate cycle"/>
    <property type="evidence" value="ECO:0007669"/>
    <property type="project" value="UniProtKB-KW"/>
</dbReference>
<dbReference type="CDD" id="cd08212">
    <property type="entry name" value="RuBisCO_large_I"/>
    <property type="match status" value="1"/>
</dbReference>
<dbReference type="FunFam" id="3.20.20.110:FF:000001">
    <property type="entry name" value="Ribulose bisphosphate carboxylase large chain"/>
    <property type="match status" value="1"/>
</dbReference>
<dbReference type="FunFam" id="3.30.70.150:FF:000001">
    <property type="entry name" value="Ribulose bisphosphate carboxylase large chain"/>
    <property type="match status" value="1"/>
</dbReference>
<dbReference type="Gene3D" id="3.20.20.110">
    <property type="entry name" value="Ribulose bisphosphate carboxylase, large subunit, C-terminal domain"/>
    <property type="match status" value="1"/>
</dbReference>
<dbReference type="Gene3D" id="3.30.70.150">
    <property type="entry name" value="RuBisCO large subunit, N-terminal domain"/>
    <property type="match status" value="1"/>
</dbReference>
<dbReference type="HAMAP" id="MF_01338">
    <property type="entry name" value="RuBisCO_L_type1"/>
    <property type="match status" value="1"/>
</dbReference>
<dbReference type="InterPro" id="IPR033966">
    <property type="entry name" value="RuBisCO"/>
</dbReference>
<dbReference type="InterPro" id="IPR020878">
    <property type="entry name" value="RuBisCo_large_chain_AS"/>
</dbReference>
<dbReference type="InterPro" id="IPR000685">
    <property type="entry name" value="RuBisCO_lsu_C"/>
</dbReference>
<dbReference type="InterPro" id="IPR036376">
    <property type="entry name" value="RuBisCO_lsu_C_sf"/>
</dbReference>
<dbReference type="InterPro" id="IPR017443">
    <property type="entry name" value="RuBisCO_lsu_fd_N"/>
</dbReference>
<dbReference type="InterPro" id="IPR036422">
    <property type="entry name" value="RuBisCO_lsu_N_sf"/>
</dbReference>
<dbReference type="InterPro" id="IPR020888">
    <property type="entry name" value="RuBisCO_lsuI"/>
</dbReference>
<dbReference type="NCBIfam" id="NF003252">
    <property type="entry name" value="PRK04208.1"/>
    <property type="match status" value="1"/>
</dbReference>
<dbReference type="PANTHER" id="PTHR42704">
    <property type="entry name" value="RIBULOSE BISPHOSPHATE CARBOXYLASE"/>
    <property type="match status" value="1"/>
</dbReference>
<dbReference type="PANTHER" id="PTHR42704:SF15">
    <property type="entry name" value="RIBULOSE BISPHOSPHATE CARBOXYLASE LARGE CHAIN"/>
    <property type="match status" value="1"/>
</dbReference>
<dbReference type="Pfam" id="PF00016">
    <property type="entry name" value="RuBisCO_large"/>
    <property type="match status" value="1"/>
</dbReference>
<dbReference type="Pfam" id="PF02788">
    <property type="entry name" value="RuBisCO_large_N"/>
    <property type="match status" value="1"/>
</dbReference>
<dbReference type="SFLD" id="SFLDG01052">
    <property type="entry name" value="RuBisCO"/>
    <property type="match status" value="1"/>
</dbReference>
<dbReference type="SFLD" id="SFLDS00014">
    <property type="entry name" value="RuBisCO"/>
    <property type="match status" value="1"/>
</dbReference>
<dbReference type="SFLD" id="SFLDG00301">
    <property type="entry name" value="RuBisCO-like_proteins"/>
    <property type="match status" value="1"/>
</dbReference>
<dbReference type="SUPFAM" id="SSF51649">
    <property type="entry name" value="RuBisCo, C-terminal domain"/>
    <property type="match status" value="1"/>
</dbReference>
<dbReference type="SUPFAM" id="SSF54966">
    <property type="entry name" value="RuBisCO, large subunit, small (N-terminal) domain"/>
    <property type="match status" value="1"/>
</dbReference>
<dbReference type="PROSITE" id="PS00157">
    <property type="entry name" value="RUBISCO_LARGE"/>
    <property type="match status" value="1"/>
</dbReference>
<proteinExistence type="inferred from homology"/>
<feature type="chain" id="PRO_0000062562" description="Ribulose bisphosphate carboxylase large chain">
    <location>
        <begin position="1" status="less than"/>
        <end position="466"/>
    </location>
</feature>
<feature type="active site" description="Proton acceptor" evidence="1">
    <location>
        <position position="165"/>
    </location>
</feature>
<feature type="active site" description="Proton acceptor" evidence="1">
    <location>
        <position position="284"/>
    </location>
</feature>
<feature type="binding site" description="in homodimeric partner" evidence="1">
    <location>
        <position position="113"/>
    </location>
    <ligand>
        <name>substrate</name>
    </ligand>
</feature>
<feature type="binding site" evidence="1">
    <location>
        <position position="163"/>
    </location>
    <ligand>
        <name>substrate</name>
    </ligand>
</feature>
<feature type="binding site" evidence="1">
    <location>
        <position position="167"/>
    </location>
    <ligand>
        <name>substrate</name>
    </ligand>
</feature>
<feature type="binding site" description="via carbamate group" evidence="1">
    <location>
        <position position="191"/>
    </location>
    <ligand>
        <name>Mg(2+)</name>
        <dbReference type="ChEBI" id="CHEBI:18420"/>
    </ligand>
</feature>
<feature type="binding site" evidence="1">
    <location>
        <position position="193"/>
    </location>
    <ligand>
        <name>Mg(2+)</name>
        <dbReference type="ChEBI" id="CHEBI:18420"/>
    </ligand>
</feature>
<feature type="binding site" evidence="1">
    <location>
        <position position="194"/>
    </location>
    <ligand>
        <name>Mg(2+)</name>
        <dbReference type="ChEBI" id="CHEBI:18420"/>
    </ligand>
</feature>
<feature type="binding site" evidence="1">
    <location>
        <position position="285"/>
    </location>
    <ligand>
        <name>substrate</name>
    </ligand>
</feature>
<feature type="binding site" evidence="1">
    <location>
        <position position="317"/>
    </location>
    <ligand>
        <name>substrate</name>
    </ligand>
</feature>
<feature type="binding site" evidence="1">
    <location>
        <position position="369"/>
    </location>
    <ligand>
        <name>substrate</name>
    </ligand>
</feature>
<feature type="site" description="Transition state stabilizer" evidence="1">
    <location>
        <position position="324"/>
    </location>
</feature>
<feature type="modified residue" description="N6,N6,N6-trimethyllysine" evidence="1">
    <location>
        <position position="4"/>
    </location>
</feature>
<feature type="modified residue" description="N6-carboxylysine" evidence="1">
    <location>
        <position position="191"/>
    </location>
</feature>
<feature type="disulfide bond" description="Interchain; in linked form" evidence="1">
    <location>
        <position position="237"/>
    </location>
</feature>
<feature type="non-terminal residue">
    <location>
        <position position="1"/>
    </location>
</feature>
<protein>
    <recommendedName>
        <fullName evidence="1">Ribulose bisphosphate carboxylase large chain</fullName>
        <shortName evidence="1">RuBisCO large subunit</shortName>
        <ecNumber evidence="1">4.1.1.39</ecNumber>
    </recommendedName>
</protein>
<gene>
    <name evidence="1" type="primary">rbcL</name>
</gene>